<keyword id="KW-0062">Aspartic protease inhibitor</keyword>
<keyword id="KW-1015">Disulfide bond</keyword>
<keyword id="KW-0646">Protease inhibitor</keyword>
<keyword id="KW-1185">Reference proteome</keyword>
<keyword id="KW-0722">Serine protease inhibitor</keyword>
<keyword id="KW-0732">Signal</keyword>
<keyword id="KW-0926">Vacuole</keyword>
<accession>P17979</accession>
<protein>
    <recommendedName>
        <fullName>Aspartic protease inhibitor 8</fullName>
        <shortName>API</shortName>
        <shortName>API-8</shortName>
        <shortName>PI-8</shortName>
        <shortName>pi8</shortName>
    </recommendedName>
    <alternativeName>
        <fullName>Cathepsin D inhibitor</fullName>
    </alternativeName>
</protein>
<reference key="1">
    <citation type="journal article" date="1990" name="Nucleic Acids Res.">
        <title>Nucleotide and deduced amino acid sequence of an aspartic proteinase inhibitor homologue from potato tubers (Solanum tuberosum L.).</title>
        <authorList>
            <person name="Strukelj B."/>
            <person name="Pungercar J."/>
            <person name="Ritonja A."/>
            <person name="Krizaj I."/>
            <person name="Gubensek F."/>
            <person name="Kregar I."/>
            <person name="Turk V."/>
        </authorList>
    </citation>
    <scope>NUCLEOTIDE SEQUENCE [MRNA]</scope>
    <source>
        <strain>cv. Ulster Prince</strain>
        <tissue>Tuber</tissue>
    </source>
</reference>
<reference key="2">
    <citation type="journal article" date="1992" name="Biol. Chem. Hoppe-Seyler">
        <title>Characterization of aspartic proteinase inhibitors from potato at the gene, cDNA and protein levels.</title>
        <authorList>
            <person name="Strukelj B."/>
            <person name="Pungercar J."/>
            <person name="Mesko P."/>
            <person name="Barlic-Maganja D."/>
            <person name="Gubensek F."/>
            <person name="Kregar I."/>
            <person name="Turk V."/>
        </authorList>
    </citation>
    <scope>NUCLEOTIDE SEQUENCE [MRNA]</scope>
    <source>
        <strain>cv. Pentland squire</strain>
        <tissue>Tuber</tissue>
    </source>
</reference>
<proteinExistence type="evidence at transcript level"/>
<feature type="signal peptide" evidence="1">
    <location>
        <begin position="1"/>
        <end position="23"/>
    </location>
</feature>
<feature type="propeptide" id="PRO_0000016920" evidence="1">
    <location>
        <begin position="24"/>
        <end position="32"/>
    </location>
</feature>
<feature type="chain" id="PRO_0000016921" description="Aspartic protease inhibitor 8">
    <location>
        <begin position="33"/>
        <end position="220"/>
    </location>
</feature>
<feature type="site" description="Reactive bond for trypsin" evidence="1">
    <location>
        <begin position="99"/>
        <end position="100"/>
    </location>
</feature>
<feature type="site" description="Reactive bond for chymotrypsin" evidence="1">
    <location>
        <begin position="143"/>
        <end position="144"/>
    </location>
</feature>
<feature type="disulfide bond" evidence="1">
    <location>
        <begin position="80"/>
        <end position="125"/>
    </location>
</feature>
<feature type="disulfide bond" evidence="1">
    <location>
        <begin position="174"/>
        <end position="185"/>
    </location>
</feature>
<comment type="function">
    <text>Inhibitor of cathepsin D (aspartic protease) and trypsin (serine protease). May protect the plant by inhibiting proteases of invading organisms.</text>
</comment>
<comment type="subcellular location">
    <subcellularLocation>
        <location evidence="1">Vacuole</location>
    </subcellularLocation>
</comment>
<comment type="similarity">
    <text evidence="2">Belongs to the protease inhibitor I3 (leguminous Kunitz-type inhibitor) family.</text>
</comment>
<organism>
    <name type="scientific">Solanum tuberosum</name>
    <name type="common">Potato</name>
    <dbReference type="NCBI Taxonomy" id="4113"/>
    <lineage>
        <taxon>Eukaryota</taxon>
        <taxon>Viridiplantae</taxon>
        <taxon>Streptophyta</taxon>
        <taxon>Embryophyta</taxon>
        <taxon>Tracheophyta</taxon>
        <taxon>Spermatophyta</taxon>
        <taxon>Magnoliopsida</taxon>
        <taxon>eudicotyledons</taxon>
        <taxon>Gunneridae</taxon>
        <taxon>Pentapetalae</taxon>
        <taxon>asterids</taxon>
        <taxon>lamiids</taxon>
        <taxon>Solanales</taxon>
        <taxon>Solanaceae</taxon>
        <taxon>Solanoideae</taxon>
        <taxon>Solaneae</taxon>
        <taxon>Solanum</taxon>
    </lineage>
</organism>
<evidence type="ECO:0000250" key="1"/>
<evidence type="ECO:0000305" key="2"/>
<name>API8_SOLTU</name>
<dbReference type="EMBL" id="X53470">
    <property type="protein sequence ID" value="CAA37566.1"/>
    <property type="molecule type" value="mRNA"/>
</dbReference>
<dbReference type="PIR" id="S10721">
    <property type="entry name" value="S10721"/>
</dbReference>
<dbReference type="PIR" id="S10979">
    <property type="entry name" value="XKPOD"/>
</dbReference>
<dbReference type="SMR" id="P17979"/>
<dbReference type="STRING" id="4113.P17979"/>
<dbReference type="MEROPS" id="I03.002"/>
<dbReference type="PaxDb" id="4113-PGSC0003DMT400024598"/>
<dbReference type="InParanoid" id="P17979"/>
<dbReference type="OrthoDB" id="1918435at2759"/>
<dbReference type="Proteomes" id="UP000011115">
    <property type="component" value="Unassembled WGS sequence"/>
</dbReference>
<dbReference type="ExpressionAtlas" id="P17979">
    <property type="expression patterns" value="baseline and differential"/>
</dbReference>
<dbReference type="GO" id="GO:0005773">
    <property type="term" value="C:vacuole"/>
    <property type="evidence" value="ECO:0007669"/>
    <property type="project" value="UniProtKB-SubCell"/>
</dbReference>
<dbReference type="GO" id="GO:0019828">
    <property type="term" value="F:aspartic-type endopeptidase inhibitor activity"/>
    <property type="evidence" value="ECO:0007669"/>
    <property type="project" value="UniProtKB-KW"/>
</dbReference>
<dbReference type="GO" id="GO:0004867">
    <property type="term" value="F:serine-type endopeptidase inhibitor activity"/>
    <property type="evidence" value="ECO:0007669"/>
    <property type="project" value="UniProtKB-KW"/>
</dbReference>
<dbReference type="CDD" id="cd23372">
    <property type="entry name" value="beta-trefoil_STI_CPI-like"/>
    <property type="match status" value="1"/>
</dbReference>
<dbReference type="Gene3D" id="2.80.10.50">
    <property type="match status" value="1"/>
</dbReference>
<dbReference type="InterPro" id="IPR011065">
    <property type="entry name" value="Kunitz_inhibitor_STI-like_sf"/>
</dbReference>
<dbReference type="InterPro" id="IPR002160">
    <property type="entry name" value="Prot_inh_Kunz-lg"/>
</dbReference>
<dbReference type="PANTHER" id="PTHR33107">
    <property type="entry name" value="KUNITZ TRYPSIN INHIBITOR 2"/>
    <property type="match status" value="1"/>
</dbReference>
<dbReference type="PANTHER" id="PTHR33107:SF38">
    <property type="entry name" value="SERINE PROTEASE INHIBITOR 5"/>
    <property type="match status" value="1"/>
</dbReference>
<dbReference type="Pfam" id="PF00197">
    <property type="entry name" value="Kunitz_legume"/>
    <property type="match status" value="1"/>
</dbReference>
<dbReference type="PRINTS" id="PR00291">
    <property type="entry name" value="KUNITZINHBTR"/>
</dbReference>
<dbReference type="SMART" id="SM00452">
    <property type="entry name" value="STI"/>
    <property type="match status" value="1"/>
</dbReference>
<dbReference type="SUPFAM" id="SSF50386">
    <property type="entry name" value="STI-like"/>
    <property type="match status" value="1"/>
</dbReference>
<dbReference type="PROSITE" id="PS00283">
    <property type="entry name" value="SOYBEAN_KUNITZ"/>
    <property type="match status" value="1"/>
</dbReference>
<sequence>MMKCLFLLCLCLLPIVVFSSTFTSQNLIDLPSESPLPKPVLDTNGKELNPDSSYRIISIGRGALGGDVYLGKSPNSDAPCPDGVFRYNSDVGPSGTPVRFIPLSGGIFEDQLLNIQFNIPTVKLCVSYTIWKVGNLNAYFRTMLLETGGTIGQADSSYFKIVKLSNFGYNLLYCPITPPFLCPFCRDDNFCAKVGVVIQNGKRRLALVNENPLDVLFQEV</sequence>